<organism>
    <name type="scientific">Escherichia coli (strain UTI89 / UPEC)</name>
    <dbReference type="NCBI Taxonomy" id="364106"/>
    <lineage>
        <taxon>Bacteria</taxon>
        <taxon>Pseudomonadati</taxon>
        <taxon>Pseudomonadota</taxon>
        <taxon>Gammaproteobacteria</taxon>
        <taxon>Enterobacterales</taxon>
        <taxon>Enterobacteriaceae</taxon>
        <taxon>Escherichia</taxon>
    </lineage>
</organism>
<reference key="1">
    <citation type="journal article" date="2006" name="Proc. Natl. Acad. Sci. U.S.A.">
        <title>Identification of genes subject to positive selection in uropathogenic strains of Escherichia coli: a comparative genomics approach.</title>
        <authorList>
            <person name="Chen S.L."/>
            <person name="Hung C.-S."/>
            <person name="Xu J."/>
            <person name="Reigstad C.S."/>
            <person name="Magrini V."/>
            <person name="Sabo A."/>
            <person name="Blasiar D."/>
            <person name="Bieri T."/>
            <person name="Meyer R.R."/>
            <person name="Ozersky P."/>
            <person name="Armstrong J.R."/>
            <person name="Fulton R.S."/>
            <person name="Latreille J.P."/>
            <person name="Spieth J."/>
            <person name="Hooton T.M."/>
            <person name="Mardis E.R."/>
            <person name="Hultgren S.J."/>
            <person name="Gordon J.I."/>
        </authorList>
    </citation>
    <scope>NUCLEOTIDE SEQUENCE [LARGE SCALE GENOMIC DNA]</scope>
    <source>
        <strain>UTI89 / UPEC</strain>
    </source>
</reference>
<feature type="signal peptide" evidence="1">
    <location>
        <begin position="1"/>
        <end position="23"/>
    </location>
</feature>
<feature type="chain" id="PRO_0000278581" description="UPF0412 protein YaaI">
    <location>
        <begin position="24"/>
        <end position="134"/>
    </location>
</feature>
<dbReference type="EMBL" id="CP000243">
    <property type="protein sequence ID" value="ABE05524.1"/>
    <property type="molecule type" value="Genomic_DNA"/>
</dbReference>
<dbReference type="RefSeq" id="WP_000843687.1">
    <property type="nucleotide sequence ID" value="NZ_CP064825.1"/>
</dbReference>
<dbReference type="KEGG" id="eci:UTI89_C0014"/>
<dbReference type="HOGENOM" id="CLU_158661_0_0_6"/>
<dbReference type="Proteomes" id="UP000001952">
    <property type="component" value="Chromosome"/>
</dbReference>
<dbReference type="HAMAP" id="MF_01372">
    <property type="entry name" value="UPF0412"/>
    <property type="match status" value="1"/>
</dbReference>
<dbReference type="InterPro" id="IPR020240">
    <property type="entry name" value="UPF0412_YaaI"/>
</dbReference>
<dbReference type="NCBIfam" id="NF007541">
    <property type="entry name" value="PRK10154.1"/>
    <property type="match status" value="1"/>
</dbReference>
<dbReference type="Pfam" id="PF10807">
    <property type="entry name" value="DUF2541"/>
    <property type="match status" value="1"/>
</dbReference>
<evidence type="ECO:0000255" key="1">
    <source>
        <dbReference type="HAMAP-Rule" id="MF_01372"/>
    </source>
</evidence>
<name>YAAI_ECOUT</name>
<gene>
    <name evidence="1" type="primary">yaaI</name>
    <name type="ordered locus">UTI89_C0014</name>
</gene>
<proteinExistence type="inferred from homology"/>
<comment type="similarity">
    <text evidence="1">Belongs to the UPF0412 family.</text>
</comment>
<accession>Q1RGJ0</accession>
<keyword id="KW-0732">Signal</keyword>
<protein>
    <recommendedName>
        <fullName evidence="1">UPF0412 protein YaaI</fullName>
    </recommendedName>
</protein>
<sequence>MKSVITISASLAISLMLCCTAQANDHKILGVIAMPRNETNDLALKLPVCRIVKRIQLSADHGDLQLSGASIYFKATRSASQTLNIPSEIKEEQTTDWININSDNDNKRCVSKITFSGHTVNSSDMATLKIIGDD</sequence>